<protein>
    <recommendedName>
        <fullName evidence="1">Cell division protein ZipA</fullName>
    </recommendedName>
</protein>
<feature type="chain" id="PRO_0000214542" description="Cell division protein ZipA">
    <location>
        <begin position="1"/>
        <end position="243"/>
    </location>
</feature>
<feature type="topological domain" description="Periplasmic" evidence="1">
    <location>
        <begin position="1"/>
        <end position="4"/>
    </location>
</feature>
<feature type="transmembrane region" description="Helical" evidence="1">
    <location>
        <begin position="5"/>
        <end position="25"/>
    </location>
</feature>
<feature type="topological domain" description="Cytoplasmic" evidence="1">
    <location>
        <begin position="26"/>
        <end position="243"/>
    </location>
</feature>
<feature type="region of interest" description="Disordered" evidence="2">
    <location>
        <begin position="30"/>
        <end position="89"/>
    </location>
</feature>
<feature type="compositionally biased region" description="Basic and acidic residues" evidence="2">
    <location>
        <begin position="35"/>
        <end position="50"/>
    </location>
</feature>
<evidence type="ECO:0000255" key="1">
    <source>
        <dbReference type="HAMAP-Rule" id="MF_00509"/>
    </source>
</evidence>
<evidence type="ECO:0000256" key="2">
    <source>
        <dbReference type="SAM" id="MobiDB-lite"/>
    </source>
</evidence>
<name>ZIPA_XANAC</name>
<proteinExistence type="inferred from homology"/>
<organism>
    <name type="scientific">Xanthomonas axonopodis pv. citri (strain 306)</name>
    <dbReference type="NCBI Taxonomy" id="190486"/>
    <lineage>
        <taxon>Bacteria</taxon>
        <taxon>Pseudomonadati</taxon>
        <taxon>Pseudomonadota</taxon>
        <taxon>Gammaproteobacteria</taxon>
        <taxon>Lysobacterales</taxon>
        <taxon>Lysobacteraceae</taxon>
        <taxon>Xanthomonas</taxon>
    </lineage>
</organism>
<reference key="1">
    <citation type="journal article" date="2002" name="Nature">
        <title>Comparison of the genomes of two Xanthomonas pathogens with differing host specificities.</title>
        <authorList>
            <person name="da Silva A.C.R."/>
            <person name="Ferro J.A."/>
            <person name="Reinach F.C."/>
            <person name="Farah C.S."/>
            <person name="Furlan L.R."/>
            <person name="Quaggio R.B."/>
            <person name="Monteiro-Vitorello C.B."/>
            <person name="Van Sluys M.A."/>
            <person name="Almeida N.F. Jr."/>
            <person name="Alves L.M.C."/>
            <person name="do Amaral A.M."/>
            <person name="Bertolini M.C."/>
            <person name="Camargo L.E.A."/>
            <person name="Camarotte G."/>
            <person name="Cannavan F."/>
            <person name="Cardozo J."/>
            <person name="Chambergo F."/>
            <person name="Ciapina L.P."/>
            <person name="Cicarelli R.M.B."/>
            <person name="Coutinho L.L."/>
            <person name="Cursino-Santos J.R."/>
            <person name="El-Dorry H."/>
            <person name="Faria J.B."/>
            <person name="Ferreira A.J.S."/>
            <person name="Ferreira R.C.C."/>
            <person name="Ferro M.I.T."/>
            <person name="Formighieri E.F."/>
            <person name="Franco M.C."/>
            <person name="Greggio C.C."/>
            <person name="Gruber A."/>
            <person name="Katsuyama A.M."/>
            <person name="Kishi L.T."/>
            <person name="Leite R.P."/>
            <person name="Lemos E.G.M."/>
            <person name="Lemos M.V.F."/>
            <person name="Locali E.C."/>
            <person name="Machado M.A."/>
            <person name="Madeira A.M.B.N."/>
            <person name="Martinez-Rossi N.M."/>
            <person name="Martins E.C."/>
            <person name="Meidanis J."/>
            <person name="Menck C.F.M."/>
            <person name="Miyaki C.Y."/>
            <person name="Moon D.H."/>
            <person name="Moreira L.M."/>
            <person name="Novo M.T.M."/>
            <person name="Okura V.K."/>
            <person name="Oliveira M.C."/>
            <person name="Oliveira V.R."/>
            <person name="Pereira H.A."/>
            <person name="Rossi A."/>
            <person name="Sena J.A.D."/>
            <person name="Silva C."/>
            <person name="de Souza R.F."/>
            <person name="Spinola L.A.F."/>
            <person name="Takita M.A."/>
            <person name="Tamura R.E."/>
            <person name="Teixeira E.C."/>
            <person name="Tezza R.I.D."/>
            <person name="Trindade dos Santos M."/>
            <person name="Truffi D."/>
            <person name="Tsai S.M."/>
            <person name="White F.F."/>
            <person name="Setubal J.C."/>
            <person name="Kitajima J.P."/>
        </authorList>
    </citation>
    <scope>NUCLEOTIDE SEQUENCE [LARGE SCALE GENOMIC DNA]</scope>
    <source>
        <strain>306</strain>
    </source>
</reference>
<sequence>MSDMAMIRIGILIAGLLLVAAIFLFGRPKKSPQGRRVDKGEGQPRERREPVISSEFGAEGDAAERAEGVEQSELNLEGQDASGGNEVGKRPNQDFDKIVSLFVAAKAGQVLRGEDVVVVAEKTGLVFGHMNVFHRLVEGHPERGPIFSMASILKPGSFDMANIREMQTPAIAFFLTLPAPMTALDAWEKMLPTVQRMAELLDGVVLDDSRNALGRQRVAHIRDELRAYDRQHQAPPLTKSPRW</sequence>
<accession>Q8PM10</accession>
<gene>
    <name evidence="1" type="primary">zipA</name>
    <name type="ordered locus">XAC1624</name>
</gene>
<comment type="function">
    <text evidence="1">Essential cell division protein that stabilizes the FtsZ protofilaments by cross-linking them and that serves as a cytoplasmic membrane anchor for the Z ring. Also required for the recruitment to the septal ring of downstream cell division proteins.</text>
</comment>
<comment type="subunit">
    <text evidence="1">Interacts with FtsZ via their C-terminal domains.</text>
</comment>
<comment type="subcellular location">
    <subcellularLocation>
        <location evidence="1">Cell inner membrane</location>
        <topology evidence="1">Single-pass type I membrane protein</topology>
    </subcellularLocation>
    <text evidence="1">Localizes to the Z ring in an FtsZ-dependent manner.</text>
</comment>
<comment type="similarity">
    <text evidence="1">Belongs to the ZipA family.</text>
</comment>
<keyword id="KW-0131">Cell cycle</keyword>
<keyword id="KW-0132">Cell division</keyword>
<keyword id="KW-0997">Cell inner membrane</keyword>
<keyword id="KW-1003">Cell membrane</keyword>
<keyword id="KW-0472">Membrane</keyword>
<keyword id="KW-0812">Transmembrane</keyword>
<keyword id="KW-1133">Transmembrane helix</keyword>
<dbReference type="EMBL" id="AE008923">
    <property type="protein sequence ID" value="AAM36492.1"/>
    <property type="molecule type" value="Genomic_DNA"/>
</dbReference>
<dbReference type="RefSeq" id="WP_011051037.1">
    <property type="nucleotide sequence ID" value="NC_003919.1"/>
</dbReference>
<dbReference type="SMR" id="Q8PM10"/>
<dbReference type="GeneID" id="66910784"/>
<dbReference type="KEGG" id="xac:XAC1624"/>
<dbReference type="eggNOG" id="COG3115">
    <property type="taxonomic scope" value="Bacteria"/>
</dbReference>
<dbReference type="HOGENOM" id="CLU_030174_2_1_6"/>
<dbReference type="Proteomes" id="UP000000576">
    <property type="component" value="Chromosome"/>
</dbReference>
<dbReference type="GO" id="GO:0032153">
    <property type="term" value="C:cell division site"/>
    <property type="evidence" value="ECO:0007669"/>
    <property type="project" value="UniProtKB-UniRule"/>
</dbReference>
<dbReference type="GO" id="GO:0005886">
    <property type="term" value="C:plasma membrane"/>
    <property type="evidence" value="ECO:0007669"/>
    <property type="project" value="UniProtKB-SubCell"/>
</dbReference>
<dbReference type="GO" id="GO:0000917">
    <property type="term" value="P:division septum assembly"/>
    <property type="evidence" value="ECO:0007669"/>
    <property type="project" value="TreeGrafter"/>
</dbReference>
<dbReference type="GO" id="GO:0043093">
    <property type="term" value="P:FtsZ-dependent cytokinesis"/>
    <property type="evidence" value="ECO:0007669"/>
    <property type="project" value="UniProtKB-UniRule"/>
</dbReference>
<dbReference type="FunFam" id="3.30.1400.10:FF:000003">
    <property type="entry name" value="Cell division protein ZipA"/>
    <property type="match status" value="1"/>
</dbReference>
<dbReference type="Gene3D" id="3.30.1400.10">
    <property type="entry name" value="ZipA, C-terminal FtsZ-binding domain"/>
    <property type="match status" value="1"/>
</dbReference>
<dbReference type="HAMAP" id="MF_00509">
    <property type="entry name" value="ZipA"/>
    <property type="match status" value="1"/>
</dbReference>
<dbReference type="InterPro" id="IPR011919">
    <property type="entry name" value="Cell_div_ZipA"/>
</dbReference>
<dbReference type="InterPro" id="IPR007449">
    <property type="entry name" value="ZipA_FtsZ-bd_C"/>
</dbReference>
<dbReference type="InterPro" id="IPR036765">
    <property type="entry name" value="ZipA_FtsZ-bd_C_sf"/>
</dbReference>
<dbReference type="NCBIfam" id="TIGR02205">
    <property type="entry name" value="septum_zipA"/>
    <property type="match status" value="1"/>
</dbReference>
<dbReference type="PANTHER" id="PTHR38685">
    <property type="entry name" value="CELL DIVISION PROTEIN ZIPA"/>
    <property type="match status" value="1"/>
</dbReference>
<dbReference type="PANTHER" id="PTHR38685:SF1">
    <property type="entry name" value="CELL DIVISION PROTEIN ZIPA"/>
    <property type="match status" value="1"/>
</dbReference>
<dbReference type="Pfam" id="PF04354">
    <property type="entry name" value="ZipA_C"/>
    <property type="match status" value="1"/>
</dbReference>
<dbReference type="SMART" id="SM00771">
    <property type="entry name" value="ZipA_C"/>
    <property type="match status" value="1"/>
</dbReference>
<dbReference type="SUPFAM" id="SSF64383">
    <property type="entry name" value="Cell-division protein ZipA, C-terminal domain"/>
    <property type="match status" value="1"/>
</dbReference>